<accession>B1VEX0</accession>
<evidence type="ECO:0000255" key="1">
    <source>
        <dbReference type="HAMAP-Rule" id="MF_01365"/>
    </source>
</evidence>
<evidence type="ECO:0000305" key="2"/>
<comment type="function">
    <text evidence="1">This protein binds to the 23S rRNA, and is important in its secondary structure. It is located near the subunit interface in the base of the L7/L12 stalk, and near the tRNA binding site of the peptidyltransferase center.</text>
</comment>
<comment type="subunit">
    <text evidence="1">Part of the 50S ribosomal subunit.</text>
</comment>
<comment type="similarity">
    <text evidence="1">Belongs to the universal ribosomal protein uL6 family.</text>
</comment>
<protein>
    <recommendedName>
        <fullName evidence="1">Large ribosomal subunit protein uL6</fullName>
    </recommendedName>
    <alternativeName>
        <fullName evidence="2">50S ribosomal protein L6</fullName>
    </alternativeName>
</protein>
<proteinExistence type="inferred from homology"/>
<feature type="chain" id="PRO_1000143968" description="Large ribosomal subunit protein uL6">
    <location>
        <begin position="1"/>
        <end position="178"/>
    </location>
</feature>
<name>RL6_CORU7</name>
<keyword id="KW-1185">Reference proteome</keyword>
<keyword id="KW-0687">Ribonucleoprotein</keyword>
<keyword id="KW-0689">Ribosomal protein</keyword>
<keyword id="KW-0694">RNA-binding</keyword>
<keyword id="KW-0699">rRNA-binding</keyword>
<gene>
    <name evidence="1" type="primary">rplF</name>
    <name type="ordered locus">cu0349</name>
</gene>
<organism>
    <name type="scientific">Corynebacterium urealyticum (strain ATCC 43042 / DSM 7109)</name>
    <dbReference type="NCBI Taxonomy" id="504474"/>
    <lineage>
        <taxon>Bacteria</taxon>
        <taxon>Bacillati</taxon>
        <taxon>Actinomycetota</taxon>
        <taxon>Actinomycetes</taxon>
        <taxon>Mycobacteriales</taxon>
        <taxon>Corynebacteriaceae</taxon>
        <taxon>Corynebacterium</taxon>
    </lineage>
</organism>
<dbReference type="EMBL" id="AM942444">
    <property type="protein sequence ID" value="CAQ04309.1"/>
    <property type="molecule type" value="Genomic_DNA"/>
</dbReference>
<dbReference type="RefSeq" id="WP_012359602.1">
    <property type="nucleotide sequence ID" value="NC_010545.1"/>
</dbReference>
<dbReference type="SMR" id="B1VEX0"/>
<dbReference type="STRING" id="504474.cu0349"/>
<dbReference type="GeneID" id="60605152"/>
<dbReference type="KEGG" id="cur:cu0349"/>
<dbReference type="eggNOG" id="COG0097">
    <property type="taxonomic scope" value="Bacteria"/>
</dbReference>
<dbReference type="HOGENOM" id="CLU_065464_1_2_11"/>
<dbReference type="Proteomes" id="UP000001727">
    <property type="component" value="Chromosome"/>
</dbReference>
<dbReference type="GO" id="GO:0022625">
    <property type="term" value="C:cytosolic large ribosomal subunit"/>
    <property type="evidence" value="ECO:0007669"/>
    <property type="project" value="TreeGrafter"/>
</dbReference>
<dbReference type="GO" id="GO:0019843">
    <property type="term" value="F:rRNA binding"/>
    <property type="evidence" value="ECO:0007669"/>
    <property type="project" value="UniProtKB-UniRule"/>
</dbReference>
<dbReference type="GO" id="GO:0003735">
    <property type="term" value="F:structural constituent of ribosome"/>
    <property type="evidence" value="ECO:0007669"/>
    <property type="project" value="InterPro"/>
</dbReference>
<dbReference type="GO" id="GO:0002181">
    <property type="term" value="P:cytoplasmic translation"/>
    <property type="evidence" value="ECO:0007669"/>
    <property type="project" value="TreeGrafter"/>
</dbReference>
<dbReference type="FunFam" id="3.90.930.12:FF:000001">
    <property type="entry name" value="50S ribosomal protein L6"/>
    <property type="match status" value="1"/>
</dbReference>
<dbReference type="FunFam" id="3.90.930.12:FF:000002">
    <property type="entry name" value="50S ribosomal protein L6"/>
    <property type="match status" value="1"/>
</dbReference>
<dbReference type="Gene3D" id="3.90.930.12">
    <property type="entry name" value="Ribosomal protein L6, alpha-beta domain"/>
    <property type="match status" value="2"/>
</dbReference>
<dbReference type="HAMAP" id="MF_01365_B">
    <property type="entry name" value="Ribosomal_uL6_B"/>
    <property type="match status" value="1"/>
</dbReference>
<dbReference type="InterPro" id="IPR000702">
    <property type="entry name" value="Ribosomal_uL6-like"/>
</dbReference>
<dbReference type="InterPro" id="IPR036789">
    <property type="entry name" value="Ribosomal_uL6-like_a/b-dom_sf"/>
</dbReference>
<dbReference type="InterPro" id="IPR020040">
    <property type="entry name" value="Ribosomal_uL6_a/b-dom"/>
</dbReference>
<dbReference type="InterPro" id="IPR019906">
    <property type="entry name" value="Ribosomal_uL6_bac-type"/>
</dbReference>
<dbReference type="NCBIfam" id="TIGR03654">
    <property type="entry name" value="L6_bact"/>
    <property type="match status" value="1"/>
</dbReference>
<dbReference type="PANTHER" id="PTHR11655">
    <property type="entry name" value="60S/50S RIBOSOMAL PROTEIN L6/L9"/>
    <property type="match status" value="1"/>
</dbReference>
<dbReference type="PANTHER" id="PTHR11655:SF14">
    <property type="entry name" value="LARGE RIBOSOMAL SUBUNIT PROTEIN UL6M"/>
    <property type="match status" value="1"/>
</dbReference>
<dbReference type="Pfam" id="PF00347">
    <property type="entry name" value="Ribosomal_L6"/>
    <property type="match status" value="2"/>
</dbReference>
<dbReference type="PIRSF" id="PIRSF002162">
    <property type="entry name" value="Ribosomal_L6"/>
    <property type="match status" value="1"/>
</dbReference>
<dbReference type="PRINTS" id="PR00059">
    <property type="entry name" value="RIBOSOMALL6"/>
</dbReference>
<dbReference type="SUPFAM" id="SSF56053">
    <property type="entry name" value="Ribosomal protein L6"/>
    <property type="match status" value="2"/>
</dbReference>
<sequence length="178" mass="19251">MSRIGFAPVSVPSGVTVTINGQNVEVKGPKGTLNTDIPAPIAVAQEGDEIVVSRPDDHRKNRSLHGLSRSLVNNMVVGVTEGYTTKMEIFGVGYRVQLKGKDLEFSLGYSHPILIKADEGITFAVDGNTKFSISGIDKQKVGQIAANIRGLRKDDPYKGKGIRYEGEQVRRKVGKTGK</sequence>
<reference key="1">
    <citation type="journal article" date="2008" name="J. Biotechnol.">
        <title>The lifestyle of Corynebacterium urealyticum derived from its complete genome sequence established by pyrosequencing.</title>
        <authorList>
            <person name="Tauch A."/>
            <person name="Trost E."/>
            <person name="Tilker A."/>
            <person name="Ludewig U."/>
            <person name="Schneiker S."/>
            <person name="Goesmann A."/>
            <person name="Arnold W."/>
            <person name="Bekel T."/>
            <person name="Brinkrolf K."/>
            <person name="Brune I."/>
            <person name="Goetker S."/>
            <person name="Kalinowski J."/>
            <person name="Kamp P.-B."/>
            <person name="Lobo F.P."/>
            <person name="Viehoever P."/>
            <person name="Weisshaar B."/>
            <person name="Soriano F."/>
            <person name="Droege M."/>
            <person name="Puehler A."/>
        </authorList>
    </citation>
    <scope>NUCLEOTIDE SEQUENCE [LARGE SCALE GENOMIC DNA]</scope>
    <source>
        <strain>ATCC 43042 / DSM 7109</strain>
    </source>
</reference>